<protein>
    <recommendedName>
        <fullName>Oligoribonuclease</fullName>
        <ecNumber>3.1.15.-</ecNumber>
    </recommendedName>
</protein>
<name>ORN_ARATH</name>
<sequence length="222" mass="24932">MNKLSNAFSVLAFADEDAPMASSSSTGKQEESVNGSLEDGDYKQPLVWIDLEMTGLNVEVDRILEIACIITNGDLTQSVEGPDLVVRQTKDCLDKMDDWCQTHHGASGLTKKVLLSAITEREAEQKVIEFVKKHVGSGNPLLAGNSVYVDFLFLKKYMPELAALFPHILVDVSSVKALCARWFPIERRKAPAKKNNHRAMDDIRESIKELKYYKKTIFKARR</sequence>
<organism>
    <name type="scientific">Arabidopsis thaliana</name>
    <name type="common">Mouse-ear cress</name>
    <dbReference type="NCBI Taxonomy" id="3702"/>
    <lineage>
        <taxon>Eukaryota</taxon>
        <taxon>Viridiplantae</taxon>
        <taxon>Streptophyta</taxon>
        <taxon>Embryophyta</taxon>
        <taxon>Tracheophyta</taxon>
        <taxon>Spermatophyta</taxon>
        <taxon>Magnoliopsida</taxon>
        <taxon>eudicotyledons</taxon>
        <taxon>Gunneridae</taxon>
        <taxon>Pentapetalae</taxon>
        <taxon>rosids</taxon>
        <taxon>malvids</taxon>
        <taxon>Brassicales</taxon>
        <taxon>Brassicaceae</taxon>
        <taxon>Camelineae</taxon>
        <taxon>Arabidopsis</taxon>
    </lineage>
</organism>
<feature type="chain" id="PRO_0000111092" description="Oligoribonuclease">
    <location>
        <begin position="1"/>
        <end position="222"/>
    </location>
</feature>
<feature type="domain" description="Exonuclease">
    <location>
        <begin position="46"/>
        <end position="210"/>
    </location>
</feature>
<feature type="region of interest" description="Disordered" evidence="3">
    <location>
        <begin position="19"/>
        <end position="38"/>
    </location>
</feature>
<feature type="compositionally biased region" description="Polar residues" evidence="3">
    <location>
        <begin position="21"/>
        <end position="35"/>
    </location>
</feature>
<feature type="active site" evidence="2">
    <location>
        <position position="167"/>
    </location>
</feature>
<keyword id="KW-0025">Alternative splicing</keyword>
<keyword id="KW-0269">Exonuclease</keyword>
<keyword id="KW-0378">Hydrolase</keyword>
<keyword id="KW-0540">Nuclease</keyword>
<keyword id="KW-1185">Reference proteome</keyword>
<evidence type="ECO:0000250" key="1"/>
<evidence type="ECO:0000255" key="2"/>
<evidence type="ECO:0000256" key="3">
    <source>
        <dbReference type="SAM" id="MobiDB-lite"/>
    </source>
</evidence>
<evidence type="ECO:0000305" key="4"/>
<gene>
    <name type="ordered locus">At2g26970</name>
    <name type="ORF">T20P8.2</name>
</gene>
<proteinExistence type="evidence at transcript level"/>
<reference key="1">
    <citation type="journal article" date="1999" name="Nature">
        <title>Sequence and analysis of chromosome 2 of the plant Arabidopsis thaliana.</title>
        <authorList>
            <person name="Lin X."/>
            <person name="Kaul S."/>
            <person name="Rounsley S.D."/>
            <person name="Shea T.P."/>
            <person name="Benito M.-I."/>
            <person name="Town C.D."/>
            <person name="Fujii C.Y."/>
            <person name="Mason T.M."/>
            <person name="Bowman C.L."/>
            <person name="Barnstead M.E."/>
            <person name="Feldblyum T.V."/>
            <person name="Buell C.R."/>
            <person name="Ketchum K.A."/>
            <person name="Lee J.J."/>
            <person name="Ronning C.M."/>
            <person name="Koo H.L."/>
            <person name="Moffat K.S."/>
            <person name="Cronin L.A."/>
            <person name="Shen M."/>
            <person name="Pai G."/>
            <person name="Van Aken S."/>
            <person name="Umayam L."/>
            <person name="Tallon L.J."/>
            <person name="Gill J.E."/>
            <person name="Adams M.D."/>
            <person name="Carrera A.J."/>
            <person name="Creasy T.H."/>
            <person name="Goodman H.M."/>
            <person name="Somerville C.R."/>
            <person name="Copenhaver G.P."/>
            <person name="Preuss D."/>
            <person name="Nierman W.C."/>
            <person name="White O."/>
            <person name="Eisen J.A."/>
            <person name="Salzberg S.L."/>
            <person name="Fraser C.M."/>
            <person name="Venter J.C."/>
        </authorList>
    </citation>
    <scope>NUCLEOTIDE SEQUENCE [LARGE SCALE GENOMIC DNA]</scope>
    <source>
        <strain>cv. Columbia</strain>
    </source>
</reference>
<reference key="2">
    <citation type="journal article" date="2017" name="Plant J.">
        <title>Araport11: a complete reannotation of the Arabidopsis thaliana reference genome.</title>
        <authorList>
            <person name="Cheng C.Y."/>
            <person name="Krishnakumar V."/>
            <person name="Chan A.P."/>
            <person name="Thibaud-Nissen F."/>
            <person name="Schobel S."/>
            <person name="Town C.D."/>
        </authorList>
    </citation>
    <scope>GENOME REANNOTATION</scope>
    <source>
        <strain>cv. Columbia</strain>
    </source>
</reference>
<reference key="3">
    <citation type="journal article" date="2003" name="Science">
        <title>Empirical analysis of transcriptional activity in the Arabidopsis genome.</title>
        <authorList>
            <person name="Yamada K."/>
            <person name="Lim J."/>
            <person name="Dale J.M."/>
            <person name="Chen H."/>
            <person name="Shinn P."/>
            <person name="Palm C.J."/>
            <person name="Southwick A.M."/>
            <person name="Wu H.C."/>
            <person name="Kim C.J."/>
            <person name="Nguyen M."/>
            <person name="Pham P.K."/>
            <person name="Cheuk R.F."/>
            <person name="Karlin-Newmann G."/>
            <person name="Liu S.X."/>
            <person name="Lam B."/>
            <person name="Sakano H."/>
            <person name="Wu T."/>
            <person name="Yu G."/>
            <person name="Miranda M."/>
            <person name="Quach H.L."/>
            <person name="Tripp M."/>
            <person name="Chang C.H."/>
            <person name="Lee J.M."/>
            <person name="Toriumi M.J."/>
            <person name="Chan M.M."/>
            <person name="Tang C.C."/>
            <person name="Onodera C.S."/>
            <person name="Deng J.M."/>
            <person name="Akiyama K."/>
            <person name="Ansari Y."/>
            <person name="Arakawa T."/>
            <person name="Banh J."/>
            <person name="Banno F."/>
            <person name="Bowser L."/>
            <person name="Brooks S.Y."/>
            <person name="Carninci P."/>
            <person name="Chao Q."/>
            <person name="Choy N."/>
            <person name="Enju A."/>
            <person name="Goldsmith A.D."/>
            <person name="Gurjal M."/>
            <person name="Hansen N.F."/>
            <person name="Hayashizaki Y."/>
            <person name="Johnson-Hopson C."/>
            <person name="Hsuan V.W."/>
            <person name="Iida K."/>
            <person name="Karnes M."/>
            <person name="Khan S."/>
            <person name="Koesema E."/>
            <person name="Ishida J."/>
            <person name="Jiang P.X."/>
            <person name="Jones T."/>
            <person name="Kawai J."/>
            <person name="Kamiya A."/>
            <person name="Meyers C."/>
            <person name="Nakajima M."/>
            <person name="Narusaka M."/>
            <person name="Seki M."/>
            <person name="Sakurai T."/>
            <person name="Satou M."/>
            <person name="Tamse R."/>
            <person name="Vaysberg M."/>
            <person name="Wallender E.K."/>
            <person name="Wong C."/>
            <person name="Yamamura Y."/>
            <person name="Yuan S."/>
            <person name="Shinozaki K."/>
            <person name="Davis R.W."/>
            <person name="Theologis A."/>
            <person name="Ecker J.R."/>
        </authorList>
    </citation>
    <scope>NUCLEOTIDE SEQUENCE [LARGE SCALE MRNA]</scope>
    <source>
        <strain>cv. Columbia</strain>
    </source>
</reference>
<comment type="function">
    <text evidence="1">3'-to-5' exoribonuclease specific for small oligoribonucleotides.</text>
</comment>
<comment type="alternative products">
    <event type="alternative splicing"/>
    <isoform>
        <id>Q9ZVE0-1</id>
        <name>1</name>
        <sequence type="displayed"/>
    </isoform>
    <text>A number of isoforms are produced. According to EST sequences.</text>
</comment>
<comment type="similarity">
    <text evidence="4">Belongs to the oligoribonuclease family.</text>
</comment>
<comment type="sequence caution" evidence="4">
    <conflict type="erroneous gene model prediction">
        <sequence resource="EMBL-CDS" id="AAC77855"/>
    </conflict>
</comment>
<accession>Q9ZVE0</accession>
<accession>Q8VZL2</accession>
<dbReference type="EC" id="3.1.15.-"/>
<dbReference type="EMBL" id="AC005623">
    <property type="protein sequence ID" value="AAC77855.1"/>
    <property type="status" value="ALT_SEQ"/>
    <property type="molecule type" value="Genomic_DNA"/>
</dbReference>
<dbReference type="EMBL" id="CP002685">
    <property type="protein sequence ID" value="AEC07912.1"/>
    <property type="molecule type" value="Genomic_DNA"/>
</dbReference>
<dbReference type="EMBL" id="AY064031">
    <property type="protein sequence ID" value="AAL36387.1"/>
    <property type="molecule type" value="mRNA"/>
</dbReference>
<dbReference type="EMBL" id="BT001963">
    <property type="protein sequence ID" value="AAN71962.1"/>
    <property type="molecule type" value="mRNA"/>
</dbReference>
<dbReference type="PIR" id="B84667">
    <property type="entry name" value="B84667"/>
</dbReference>
<dbReference type="RefSeq" id="NP_850090.1">
    <molecule id="Q9ZVE0-1"/>
    <property type="nucleotide sequence ID" value="NM_179759.3"/>
</dbReference>
<dbReference type="SMR" id="Q9ZVE0"/>
<dbReference type="FunCoup" id="Q9ZVE0">
    <property type="interactions" value="3640"/>
</dbReference>
<dbReference type="STRING" id="3702.Q9ZVE0"/>
<dbReference type="PaxDb" id="3702-AT2G26970.1"/>
<dbReference type="ProteomicsDB" id="248823">
    <molecule id="Q9ZVE0-1"/>
</dbReference>
<dbReference type="EnsemblPlants" id="AT2G26970.1">
    <molecule id="Q9ZVE0-1"/>
    <property type="protein sequence ID" value="AT2G26970.1"/>
    <property type="gene ID" value="AT2G26970"/>
</dbReference>
<dbReference type="GeneID" id="817238"/>
<dbReference type="Gramene" id="AT2G26970.1">
    <molecule id="Q9ZVE0-1"/>
    <property type="protein sequence ID" value="AT2G26970.1"/>
    <property type="gene ID" value="AT2G26970"/>
</dbReference>
<dbReference type="KEGG" id="ath:AT2G26970"/>
<dbReference type="Araport" id="AT2G26970"/>
<dbReference type="TAIR" id="AT2G26970"/>
<dbReference type="eggNOG" id="KOG3242">
    <property type="taxonomic scope" value="Eukaryota"/>
</dbReference>
<dbReference type="InParanoid" id="Q9ZVE0"/>
<dbReference type="OrthoDB" id="270189at2759"/>
<dbReference type="PhylomeDB" id="Q9ZVE0"/>
<dbReference type="PRO" id="PR:Q9ZVE0"/>
<dbReference type="Proteomes" id="UP000006548">
    <property type="component" value="Chromosome 2"/>
</dbReference>
<dbReference type="ExpressionAtlas" id="Q9ZVE0">
    <property type="expression patterns" value="baseline and differential"/>
</dbReference>
<dbReference type="GO" id="GO:0000175">
    <property type="term" value="F:3'-5'-RNA exonuclease activity"/>
    <property type="evidence" value="ECO:0007669"/>
    <property type="project" value="InterPro"/>
</dbReference>
<dbReference type="GO" id="GO:0003676">
    <property type="term" value="F:nucleic acid binding"/>
    <property type="evidence" value="ECO:0007669"/>
    <property type="project" value="InterPro"/>
</dbReference>
<dbReference type="CDD" id="cd06135">
    <property type="entry name" value="Orn"/>
    <property type="match status" value="1"/>
</dbReference>
<dbReference type="FunFam" id="3.30.420.10:FF:000003">
    <property type="entry name" value="Oligoribonuclease"/>
    <property type="match status" value="1"/>
</dbReference>
<dbReference type="Gene3D" id="3.30.420.10">
    <property type="entry name" value="Ribonuclease H-like superfamily/Ribonuclease H"/>
    <property type="match status" value="1"/>
</dbReference>
<dbReference type="InterPro" id="IPR013520">
    <property type="entry name" value="Exonuclease_RNaseT/DNA_pol3"/>
</dbReference>
<dbReference type="InterPro" id="IPR022894">
    <property type="entry name" value="Oligoribonuclease"/>
</dbReference>
<dbReference type="InterPro" id="IPR012337">
    <property type="entry name" value="RNaseH-like_sf"/>
</dbReference>
<dbReference type="InterPro" id="IPR036397">
    <property type="entry name" value="RNaseH_sf"/>
</dbReference>
<dbReference type="NCBIfam" id="NF003765">
    <property type="entry name" value="PRK05359.1"/>
    <property type="match status" value="1"/>
</dbReference>
<dbReference type="PANTHER" id="PTHR11046">
    <property type="entry name" value="OLIGORIBONUCLEASE, MITOCHONDRIAL"/>
    <property type="match status" value="1"/>
</dbReference>
<dbReference type="PANTHER" id="PTHR11046:SF0">
    <property type="entry name" value="OLIGORIBONUCLEASE, MITOCHONDRIAL"/>
    <property type="match status" value="1"/>
</dbReference>
<dbReference type="Pfam" id="PF00929">
    <property type="entry name" value="RNase_T"/>
    <property type="match status" value="1"/>
</dbReference>
<dbReference type="SMART" id="SM00479">
    <property type="entry name" value="EXOIII"/>
    <property type="match status" value="1"/>
</dbReference>
<dbReference type="SUPFAM" id="SSF53098">
    <property type="entry name" value="Ribonuclease H-like"/>
    <property type="match status" value="1"/>
</dbReference>